<evidence type="ECO:0000255" key="1">
    <source>
        <dbReference type="HAMAP-Rule" id="MF_01027"/>
    </source>
</evidence>
<comment type="function">
    <text evidence="1">Catalyzes the isomerization between 2-isopropylmalate and 3-isopropylmalate, via the formation of 2-isopropylmaleate.</text>
</comment>
<comment type="catalytic activity">
    <reaction evidence="1">
        <text>(2R,3S)-3-isopropylmalate = (2S)-2-isopropylmalate</text>
        <dbReference type="Rhea" id="RHEA:32287"/>
        <dbReference type="ChEBI" id="CHEBI:1178"/>
        <dbReference type="ChEBI" id="CHEBI:35121"/>
        <dbReference type="EC" id="4.2.1.33"/>
    </reaction>
</comment>
<comment type="cofactor">
    <cofactor evidence="1">
        <name>[4Fe-4S] cluster</name>
        <dbReference type="ChEBI" id="CHEBI:49883"/>
    </cofactor>
    <text evidence="1">Binds 1 [4Fe-4S] cluster per subunit.</text>
</comment>
<comment type="pathway">
    <text evidence="1">Amino-acid biosynthesis; L-leucine biosynthesis; L-leucine from 3-methyl-2-oxobutanoate: step 2/4.</text>
</comment>
<comment type="subunit">
    <text evidence="1">Heterodimer of LeuC and LeuD.</text>
</comment>
<comment type="similarity">
    <text evidence="1">Belongs to the aconitase/IPM isomerase family. LeuC type 2 subfamily.</text>
</comment>
<name>LEUC_CAMC1</name>
<proteinExistence type="inferred from homology"/>
<organism>
    <name type="scientific">Campylobacter concisus (strain 13826)</name>
    <dbReference type="NCBI Taxonomy" id="360104"/>
    <lineage>
        <taxon>Bacteria</taxon>
        <taxon>Pseudomonadati</taxon>
        <taxon>Campylobacterota</taxon>
        <taxon>Epsilonproteobacteria</taxon>
        <taxon>Campylobacterales</taxon>
        <taxon>Campylobacteraceae</taxon>
        <taxon>Campylobacter</taxon>
    </lineage>
</organism>
<dbReference type="EC" id="4.2.1.33" evidence="1"/>
<dbReference type="EMBL" id="CP000792">
    <property type="protein sequence ID" value="EAT97952.1"/>
    <property type="molecule type" value="Genomic_DNA"/>
</dbReference>
<dbReference type="RefSeq" id="WP_012140464.1">
    <property type="nucleotide sequence ID" value="NC_009802.2"/>
</dbReference>
<dbReference type="SMR" id="A7ZFP0"/>
<dbReference type="STRING" id="360104.CCC13826_2194"/>
<dbReference type="KEGG" id="cco:CCC13826_2194"/>
<dbReference type="eggNOG" id="COG0065">
    <property type="taxonomic scope" value="Bacteria"/>
</dbReference>
<dbReference type="HOGENOM" id="CLU_006714_3_4_7"/>
<dbReference type="OrthoDB" id="9764318at2"/>
<dbReference type="UniPathway" id="UPA00048">
    <property type="reaction ID" value="UER00071"/>
</dbReference>
<dbReference type="Proteomes" id="UP000001121">
    <property type="component" value="Chromosome"/>
</dbReference>
<dbReference type="GO" id="GO:0003861">
    <property type="term" value="F:3-isopropylmalate dehydratase activity"/>
    <property type="evidence" value="ECO:0007669"/>
    <property type="project" value="UniProtKB-UniRule"/>
</dbReference>
<dbReference type="GO" id="GO:0051539">
    <property type="term" value="F:4 iron, 4 sulfur cluster binding"/>
    <property type="evidence" value="ECO:0007669"/>
    <property type="project" value="UniProtKB-KW"/>
</dbReference>
<dbReference type="GO" id="GO:0046872">
    <property type="term" value="F:metal ion binding"/>
    <property type="evidence" value="ECO:0007669"/>
    <property type="project" value="UniProtKB-KW"/>
</dbReference>
<dbReference type="GO" id="GO:0009098">
    <property type="term" value="P:L-leucine biosynthetic process"/>
    <property type="evidence" value="ECO:0007669"/>
    <property type="project" value="UniProtKB-UniRule"/>
</dbReference>
<dbReference type="CDD" id="cd01583">
    <property type="entry name" value="IPMI"/>
    <property type="match status" value="1"/>
</dbReference>
<dbReference type="Gene3D" id="3.30.499.10">
    <property type="entry name" value="Aconitase, domain 3"/>
    <property type="match status" value="2"/>
</dbReference>
<dbReference type="HAMAP" id="MF_01027">
    <property type="entry name" value="LeuC_type2"/>
    <property type="match status" value="1"/>
</dbReference>
<dbReference type="InterPro" id="IPR015931">
    <property type="entry name" value="Acnase/IPM_dHydase_lsu_aba_1/3"/>
</dbReference>
<dbReference type="InterPro" id="IPR001030">
    <property type="entry name" value="Acoase/IPM_deHydtase_lsu_aba"/>
</dbReference>
<dbReference type="InterPro" id="IPR018136">
    <property type="entry name" value="Aconitase_4Fe-4S_BS"/>
</dbReference>
<dbReference type="InterPro" id="IPR036008">
    <property type="entry name" value="Aconitase_4Fe-4S_dom"/>
</dbReference>
<dbReference type="InterPro" id="IPR011826">
    <property type="entry name" value="HAcnase/IPMdehydase_lsu_prok"/>
</dbReference>
<dbReference type="InterPro" id="IPR006251">
    <property type="entry name" value="Homoacnase/IPMdehydase_lsu"/>
</dbReference>
<dbReference type="InterPro" id="IPR050067">
    <property type="entry name" value="IPM_dehydratase_rel_enz"/>
</dbReference>
<dbReference type="InterPro" id="IPR033941">
    <property type="entry name" value="IPMI_cat"/>
</dbReference>
<dbReference type="InterPro" id="IPR011823">
    <property type="entry name" value="IsopropMal_deHydtase_lsu_bac"/>
</dbReference>
<dbReference type="NCBIfam" id="TIGR01343">
    <property type="entry name" value="hacA_fam"/>
    <property type="match status" value="1"/>
</dbReference>
<dbReference type="NCBIfam" id="TIGR02086">
    <property type="entry name" value="IPMI_arch"/>
    <property type="match status" value="1"/>
</dbReference>
<dbReference type="NCBIfam" id="TIGR02083">
    <property type="entry name" value="LEU2"/>
    <property type="match status" value="1"/>
</dbReference>
<dbReference type="NCBIfam" id="NF001614">
    <property type="entry name" value="PRK00402.1"/>
    <property type="match status" value="1"/>
</dbReference>
<dbReference type="PANTHER" id="PTHR43822:SF16">
    <property type="entry name" value="3-ISOPROPYLMALATE DEHYDRATASE LARGE SUBUNIT 2"/>
    <property type="match status" value="1"/>
</dbReference>
<dbReference type="PANTHER" id="PTHR43822">
    <property type="entry name" value="HOMOACONITASE, MITOCHONDRIAL-RELATED"/>
    <property type="match status" value="1"/>
</dbReference>
<dbReference type="Pfam" id="PF00330">
    <property type="entry name" value="Aconitase"/>
    <property type="match status" value="1"/>
</dbReference>
<dbReference type="PRINTS" id="PR00415">
    <property type="entry name" value="ACONITASE"/>
</dbReference>
<dbReference type="SUPFAM" id="SSF53732">
    <property type="entry name" value="Aconitase iron-sulfur domain"/>
    <property type="match status" value="1"/>
</dbReference>
<dbReference type="PROSITE" id="PS00450">
    <property type="entry name" value="ACONITASE_1"/>
    <property type="match status" value="1"/>
</dbReference>
<dbReference type="PROSITE" id="PS01244">
    <property type="entry name" value="ACONITASE_2"/>
    <property type="match status" value="1"/>
</dbReference>
<accession>A7ZFP0</accession>
<protein>
    <recommendedName>
        <fullName evidence="1">3-isopropylmalate dehydratase large subunit</fullName>
        <ecNumber evidence="1">4.2.1.33</ecNumber>
    </recommendedName>
    <alternativeName>
        <fullName evidence="1">Alpha-IPM isomerase</fullName>
        <shortName evidence="1">IPMI</shortName>
    </alternativeName>
    <alternativeName>
        <fullName evidence="1">Isopropylmalate isomerase</fullName>
    </alternativeName>
</protein>
<feature type="chain" id="PRO_1000072950" description="3-isopropylmalate dehydratase large subunit">
    <location>
        <begin position="1"/>
        <end position="421"/>
    </location>
</feature>
<feature type="binding site" evidence="1">
    <location>
        <position position="302"/>
    </location>
    <ligand>
        <name>[4Fe-4S] cluster</name>
        <dbReference type="ChEBI" id="CHEBI:49883"/>
    </ligand>
</feature>
<feature type="binding site" evidence="1">
    <location>
        <position position="362"/>
    </location>
    <ligand>
        <name>[4Fe-4S] cluster</name>
        <dbReference type="ChEBI" id="CHEBI:49883"/>
    </ligand>
</feature>
<feature type="binding site" evidence="1">
    <location>
        <position position="365"/>
    </location>
    <ligand>
        <name>[4Fe-4S] cluster</name>
        <dbReference type="ChEBI" id="CHEBI:49883"/>
    </ligand>
</feature>
<sequence length="421" mass="45764">MKQTITEKIFSDHVGKEVSAGEIIESKIDMIIGNDITTPISIKQFERSGAKKLANPDGFAIVMDHYIPTKDILSANQAKISREFAYKHDLKNYFDEKDMGIEHAILPEKGLVIPGDVIIGADSHTCTHGALGAFSTGMGSTDLAYAMITGKNWFKVPESIKVVFKGKLDKHVYGKDLILEIIRQIGVDGALYKALEFSGEVIDGLSMDDRFSMCNMAIEAGAKSGIIAVDEITKEFLKDKNLRDKPKFFYSDEGAKYDKILEIDVTNLDPVIAYPFLPSNGKSVRQAVRDDLAIDQAFIGSCTNGRLSDLRIAAQILKGKKVARKTRLIITPATQKIARAAEKEGLIDIFIEAGAVVSNPTCGACLGGYMGILGANERCISTTNRNFVGRMGDRTSEIYLANSAVVAASAIAGKIADPRDL</sequence>
<gene>
    <name evidence="1" type="primary">leuC</name>
    <name type="ordered locus">Ccon26_17620</name>
    <name type="ORF">CCC13826_2194</name>
</gene>
<reference key="1">
    <citation type="submission" date="2007-10" db="EMBL/GenBank/DDBJ databases">
        <title>Genome sequence of Campylobacter concisus 13826 isolated from human feces.</title>
        <authorList>
            <person name="Fouts D.E."/>
            <person name="Mongodin E.F."/>
            <person name="Puiu D."/>
            <person name="Sebastian Y."/>
            <person name="Miller W.G."/>
            <person name="Mandrell R.E."/>
            <person name="On S."/>
            <person name="Nelson K.E."/>
        </authorList>
    </citation>
    <scope>NUCLEOTIDE SEQUENCE [LARGE SCALE GENOMIC DNA]</scope>
    <source>
        <strain>13826</strain>
    </source>
</reference>
<keyword id="KW-0004">4Fe-4S</keyword>
<keyword id="KW-0028">Amino-acid biosynthesis</keyword>
<keyword id="KW-0100">Branched-chain amino acid biosynthesis</keyword>
<keyword id="KW-0408">Iron</keyword>
<keyword id="KW-0411">Iron-sulfur</keyword>
<keyword id="KW-0432">Leucine biosynthesis</keyword>
<keyword id="KW-0456">Lyase</keyword>
<keyword id="KW-0479">Metal-binding</keyword>